<proteinExistence type="evidence at protein level"/>
<accession>Q9K062</accession>
<keyword id="KW-0963">Cytoplasm</keyword>
<keyword id="KW-0460">Magnesium</keyword>
<keyword id="KW-0479">Metal-binding</keyword>
<keyword id="KW-0548">Nucleotidyltransferase</keyword>
<keyword id="KW-1185">Reference proteome</keyword>
<keyword id="KW-0694">RNA-binding</keyword>
<keyword id="KW-0808">Transferase</keyword>
<sequence>MMFDKHVKTFQYGNQTVTLETGEIARQAAAAVKVSMGDTVVLVAVTTNKEVKEGQDFFPLTVDYLERTYAAGKIPGGFFKREGKQSEKEILTSRLIDRPIRPLFPEGFYHDIQIVAMVVSVDPEIDSDIPAMLGASAALVLSGVPFAGPIGAARVGYVNGVYVLNPTKAELAKSQLDLVVAGTSKAVLMVESEAKILPEDVMLGAVVYGHDQMQVAINAINEFADEVNPELWDWKAPETNEELVAKVRGIAGETIKEAFKIRQKQARSAKLDEAWSAVKEALITEETDTLAANEIKGIFKHLEADVVRSQILDGQPRIDGRDTRTVRPLNIQTSVLPRTHGSALFTRGETQALAVATLGTSRDEQIIDALSGEYTDRFMLHYNFPPYSTGEVGRMGAPKRREIGHGRLAKRALLAVLPKPEDFSYTMRVVSEITESNGSSSMASVCGGCLSLLSAGVPLKAHVAGIAMGLILEGNKFAVLTDILGDEDHLGDMDFKVAGTTEGVTALQMDIKIQGITKEIMQIALAQAKEARLHILDQMKAAVAGPQELSAHAPRLFTMKINQDKIREVIGKGGETIRSITAETGTEINIAEDGTITIAATTQEAGDAAKKRIEQITAEVEVGKVYEGTVVKILDNNVGAIVSVMPGKDGLVHISQIAHERVRNVGDYLQVGQVVNVKALEVDDRGRVRLSIKALLDAPAREENAAE</sequence>
<name>PNP_NEIMB</name>
<dbReference type="EC" id="2.7.7.8" evidence="1"/>
<dbReference type="EMBL" id="AE002098">
    <property type="protein sequence ID" value="AAF41171.1"/>
    <property type="molecule type" value="Genomic_DNA"/>
</dbReference>
<dbReference type="PIR" id="C81161">
    <property type="entry name" value="C81161"/>
</dbReference>
<dbReference type="RefSeq" id="NP_273800.1">
    <property type="nucleotide sequence ID" value="NC_003112.2"/>
</dbReference>
<dbReference type="RefSeq" id="WP_010980838.1">
    <property type="nucleotide sequence ID" value="NC_003112.2"/>
</dbReference>
<dbReference type="SMR" id="Q9K062"/>
<dbReference type="FunCoup" id="Q9K062">
    <property type="interactions" value="513"/>
</dbReference>
<dbReference type="STRING" id="122586.NMB0758"/>
<dbReference type="PaxDb" id="122586-NMB0758"/>
<dbReference type="KEGG" id="nme:NMB0758"/>
<dbReference type="PATRIC" id="fig|122586.8.peg.962"/>
<dbReference type="HOGENOM" id="CLU_004217_2_2_4"/>
<dbReference type="InParanoid" id="Q9K062"/>
<dbReference type="OrthoDB" id="9804305at2"/>
<dbReference type="Proteomes" id="UP000000425">
    <property type="component" value="Chromosome"/>
</dbReference>
<dbReference type="GO" id="GO:0005829">
    <property type="term" value="C:cytosol"/>
    <property type="evidence" value="ECO:0000318"/>
    <property type="project" value="GO_Central"/>
</dbReference>
<dbReference type="GO" id="GO:0000175">
    <property type="term" value="F:3'-5'-RNA exonuclease activity"/>
    <property type="evidence" value="ECO:0000318"/>
    <property type="project" value="GO_Central"/>
</dbReference>
<dbReference type="GO" id="GO:0000287">
    <property type="term" value="F:magnesium ion binding"/>
    <property type="evidence" value="ECO:0007669"/>
    <property type="project" value="UniProtKB-UniRule"/>
</dbReference>
<dbReference type="GO" id="GO:0004654">
    <property type="term" value="F:polyribonucleotide nucleotidyltransferase activity"/>
    <property type="evidence" value="ECO:0000318"/>
    <property type="project" value="GO_Central"/>
</dbReference>
<dbReference type="GO" id="GO:0003723">
    <property type="term" value="F:RNA binding"/>
    <property type="evidence" value="ECO:0007669"/>
    <property type="project" value="UniProtKB-UniRule"/>
</dbReference>
<dbReference type="GO" id="GO:0006402">
    <property type="term" value="P:mRNA catabolic process"/>
    <property type="evidence" value="ECO:0007669"/>
    <property type="project" value="UniProtKB-UniRule"/>
</dbReference>
<dbReference type="GO" id="GO:0006401">
    <property type="term" value="P:RNA catabolic process"/>
    <property type="evidence" value="ECO:0000318"/>
    <property type="project" value="GO_Central"/>
</dbReference>
<dbReference type="GO" id="GO:0006396">
    <property type="term" value="P:RNA processing"/>
    <property type="evidence" value="ECO:0007669"/>
    <property type="project" value="InterPro"/>
</dbReference>
<dbReference type="CDD" id="cd02393">
    <property type="entry name" value="KH-I_PNPase"/>
    <property type="match status" value="1"/>
</dbReference>
<dbReference type="CDD" id="cd11363">
    <property type="entry name" value="RNase_PH_PNPase_1"/>
    <property type="match status" value="1"/>
</dbReference>
<dbReference type="CDD" id="cd11364">
    <property type="entry name" value="RNase_PH_PNPase_2"/>
    <property type="match status" value="1"/>
</dbReference>
<dbReference type="CDD" id="cd04472">
    <property type="entry name" value="S1_PNPase"/>
    <property type="match status" value="1"/>
</dbReference>
<dbReference type="FunFam" id="3.30.1370.10:FF:000001">
    <property type="entry name" value="Polyribonucleotide nucleotidyltransferase"/>
    <property type="match status" value="1"/>
</dbReference>
<dbReference type="FunFam" id="3.30.230.70:FF:000001">
    <property type="entry name" value="Polyribonucleotide nucleotidyltransferase"/>
    <property type="match status" value="1"/>
</dbReference>
<dbReference type="FunFam" id="3.30.230.70:FF:000002">
    <property type="entry name" value="Polyribonucleotide nucleotidyltransferase"/>
    <property type="match status" value="1"/>
</dbReference>
<dbReference type="Gene3D" id="3.30.230.70">
    <property type="entry name" value="GHMP Kinase, N-terminal domain"/>
    <property type="match status" value="2"/>
</dbReference>
<dbReference type="Gene3D" id="3.30.1370.10">
    <property type="entry name" value="K Homology domain, type 1"/>
    <property type="match status" value="1"/>
</dbReference>
<dbReference type="Gene3D" id="2.40.50.140">
    <property type="entry name" value="Nucleic acid-binding proteins"/>
    <property type="match status" value="1"/>
</dbReference>
<dbReference type="HAMAP" id="MF_01595">
    <property type="entry name" value="PNPase"/>
    <property type="match status" value="1"/>
</dbReference>
<dbReference type="InterPro" id="IPR001247">
    <property type="entry name" value="ExoRNase_PH_dom1"/>
</dbReference>
<dbReference type="InterPro" id="IPR015847">
    <property type="entry name" value="ExoRNase_PH_dom2"/>
</dbReference>
<dbReference type="InterPro" id="IPR036345">
    <property type="entry name" value="ExoRNase_PH_dom2_sf"/>
</dbReference>
<dbReference type="InterPro" id="IPR004087">
    <property type="entry name" value="KH_dom"/>
</dbReference>
<dbReference type="InterPro" id="IPR004088">
    <property type="entry name" value="KH_dom_type_1"/>
</dbReference>
<dbReference type="InterPro" id="IPR036612">
    <property type="entry name" value="KH_dom_type_1_sf"/>
</dbReference>
<dbReference type="InterPro" id="IPR012340">
    <property type="entry name" value="NA-bd_OB-fold"/>
</dbReference>
<dbReference type="InterPro" id="IPR012162">
    <property type="entry name" value="PNPase"/>
</dbReference>
<dbReference type="InterPro" id="IPR027408">
    <property type="entry name" value="PNPase/RNase_PH_dom_sf"/>
</dbReference>
<dbReference type="InterPro" id="IPR015848">
    <property type="entry name" value="PNPase_PH_RNA-bd_bac/org-type"/>
</dbReference>
<dbReference type="InterPro" id="IPR020568">
    <property type="entry name" value="Ribosomal_Su5_D2-typ_SF"/>
</dbReference>
<dbReference type="InterPro" id="IPR003029">
    <property type="entry name" value="S1_domain"/>
</dbReference>
<dbReference type="NCBIfam" id="TIGR03591">
    <property type="entry name" value="polynuc_phos"/>
    <property type="match status" value="1"/>
</dbReference>
<dbReference type="NCBIfam" id="NF008805">
    <property type="entry name" value="PRK11824.1"/>
    <property type="match status" value="1"/>
</dbReference>
<dbReference type="PANTHER" id="PTHR11252">
    <property type="entry name" value="POLYRIBONUCLEOTIDE NUCLEOTIDYLTRANSFERASE"/>
    <property type="match status" value="1"/>
</dbReference>
<dbReference type="PANTHER" id="PTHR11252:SF0">
    <property type="entry name" value="POLYRIBONUCLEOTIDE NUCLEOTIDYLTRANSFERASE 1, MITOCHONDRIAL"/>
    <property type="match status" value="1"/>
</dbReference>
<dbReference type="Pfam" id="PF00013">
    <property type="entry name" value="KH_1"/>
    <property type="match status" value="1"/>
</dbReference>
<dbReference type="Pfam" id="PF03726">
    <property type="entry name" value="PNPase"/>
    <property type="match status" value="1"/>
</dbReference>
<dbReference type="Pfam" id="PF01138">
    <property type="entry name" value="RNase_PH"/>
    <property type="match status" value="2"/>
</dbReference>
<dbReference type="Pfam" id="PF03725">
    <property type="entry name" value="RNase_PH_C"/>
    <property type="match status" value="2"/>
</dbReference>
<dbReference type="Pfam" id="PF00575">
    <property type="entry name" value="S1"/>
    <property type="match status" value="1"/>
</dbReference>
<dbReference type="PIRSF" id="PIRSF005499">
    <property type="entry name" value="PNPase"/>
    <property type="match status" value="1"/>
</dbReference>
<dbReference type="SMART" id="SM00322">
    <property type="entry name" value="KH"/>
    <property type="match status" value="1"/>
</dbReference>
<dbReference type="SMART" id="SM00316">
    <property type="entry name" value="S1"/>
    <property type="match status" value="1"/>
</dbReference>
<dbReference type="SUPFAM" id="SSF54791">
    <property type="entry name" value="Eukaryotic type KH-domain (KH-domain type I)"/>
    <property type="match status" value="1"/>
</dbReference>
<dbReference type="SUPFAM" id="SSF50249">
    <property type="entry name" value="Nucleic acid-binding proteins"/>
    <property type="match status" value="1"/>
</dbReference>
<dbReference type="SUPFAM" id="SSF55666">
    <property type="entry name" value="Ribonuclease PH domain 2-like"/>
    <property type="match status" value="2"/>
</dbReference>
<dbReference type="SUPFAM" id="SSF54211">
    <property type="entry name" value="Ribosomal protein S5 domain 2-like"/>
    <property type="match status" value="2"/>
</dbReference>
<dbReference type="PROSITE" id="PS50084">
    <property type="entry name" value="KH_TYPE_1"/>
    <property type="match status" value="1"/>
</dbReference>
<dbReference type="PROSITE" id="PS50126">
    <property type="entry name" value="S1"/>
    <property type="match status" value="1"/>
</dbReference>
<protein>
    <recommendedName>
        <fullName evidence="1">Polyribonucleotide nucleotidyltransferase</fullName>
        <ecNumber evidence="1">2.7.7.8</ecNumber>
    </recommendedName>
    <alternativeName>
        <fullName evidence="1">Polynucleotide phosphorylase</fullName>
        <shortName evidence="1">PNPase</shortName>
    </alternativeName>
</protein>
<feature type="chain" id="PRO_0000320268" description="Polyribonucleotide nucleotidyltransferase">
    <location>
        <begin position="1"/>
        <end position="707"/>
    </location>
</feature>
<feature type="domain" description="KH" evidence="1">
    <location>
        <begin position="554"/>
        <end position="613"/>
    </location>
</feature>
<feature type="domain" description="S1 motif" evidence="1">
    <location>
        <begin position="623"/>
        <end position="693"/>
    </location>
</feature>
<feature type="binding site" evidence="1">
    <location>
        <position position="488"/>
    </location>
    <ligand>
        <name>Mg(2+)</name>
        <dbReference type="ChEBI" id="CHEBI:18420"/>
    </ligand>
</feature>
<feature type="binding site" evidence="1">
    <location>
        <position position="494"/>
    </location>
    <ligand>
        <name>Mg(2+)</name>
        <dbReference type="ChEBI" id="CHEBI:18420"/>
    </ligand>
</feature>
<organism>
    <name type="scientific">Neisseria meningitidis serogroup B (strain ATCC BAA-335 / MC58)</name>
    <dbReference type="NCBI Taxonomy" id="122586"/>
    <lineage>
        <taxon>Bacteria</taxon>
        <taxon>Pseudomonadati</taxon>
        <taxon>Pseudomonadota</taxon>
        <taxon>Betaproteobacteria</taxon>
        <taxon>Neisseriales</taxon>
        <taxon>Neisseriaceae</taxon>
        <taxon>Neisseria</taxon>
    </lineage>
</organism>
<reference key="1">
    <citation type="journal article" date="2000" name="Science">
        <title>Complete genome sequence of Neisseria meningitidis serogroup B strain MC58.</title>
        <authorList>
            <person name="Tettelin H."/>
            <person name="Saunders N.J."/>
            <person name="Heidelberg J.F."/>
            <person name="Jeffries A.C."/>
            <person name="Nelson K.E."/>
            <person name="Eisen J.A."/>
            <person name="Ketchum K.A."/>
            <person name="Hood D.W."/>
            <person name="Peden J.F."/>
            <person name="Dodson R.J."/>
            <person name="Nelson W.C."/>
            <person name="Gwinn M.L."/>
            <person name="DeBoy R.T."/>
            <person name="Peterson J.D."/>
            <person name="Hickey E.K."/>
            <person name="Haft D.H."/>
            <person name="Salzberg S.L."/>
            <person name="White O."/>
            <person name="Fleischmann R.D."/>
            <person name="Dougherty B.A."/>
            <person name="Mason T.M."/>
            <person name="Ciecko A."/>
            <person name="Parksey D.S."/>
            <person name="Blair E."/>
            <person name="Cittone H."/>
            <person name="Clark E.B."/>
            <person name="Cotton M.D."/>
            <person name="Utterback T.R."/>
            <person name="Khouri H.M."/>
            <person name="Qin H."/>
            <person name="Vamathevan J.J."/>
            <person name="Gill J."/>
            <person name="Scarlato V."/>
            <person name="Masignani V."/>
            <person name="Pizza M."/>
            <person name="Grandi G."/>
            <person name="Sun L."/>
            <person name="Smith H.O."/>
            <person name="Fraser C.M."/>
            <person name="Moxon E.R."/>
            <person name="Rappuoli R."/>
            <person name="Venter J.C."/>
        </authorList>
    </citation>
    <scope>NUCLEOTIDE SEQUENCE [LARGE SCALE GENOMIC DNA]</scope>
    <source>
        <strain>ATCC BAA-335 / MC58</strain>
    </source>
</reference>
<reference key="2">
    <citation type="journal article" date="2006" name="Proteomics">
        <title>Proteomic analysis of a meningococcal outer membrane vesicle vaccine prepared from the group B strain NZ98/254.</title>
        <authorList>
            <person name="Vipond C."/>
            <person name="Suker J."/>
            <person name="Jones C."/>
            <person name="Tang C."/>
            <person name="Feavers I.M."/>
            <person name="Wheeler J.X."/>
        </authorList>
    </citation>
    <scope>IDENTIFICATION BY MASS SPECTROMETRY [LARGE SCALE ANALYSIS]</scope>
    <source>
        <strain>NZ98/254 / Serogroup B</strain>
    </source>
</reference>
<evidence type="ECO:0000255" key="1">
    <source>
        <dbReference type="HAMAP-Rule" id="MF_01595"/>
    </source>
</evidence>
<gene>
    <name evidence="1" type="primary">pnp</name>
    <name type="ordered locus">NMB0758</name>
</gene>
<comment type="function">
    <text evidence="1">Involved in mRNA degradation. Catalyzes the phosphorolysis of single-stranded polyribonucleotides processively in the 3'- to 5'-direction.</text>
</comment>
<comment type="catalytic activity">
    <reaction evidence="1">
        <text>RNA(n+1) + phosphate = RNA(n) + a ribonucleoside 5'-diphosphate</text>
        <dbReference type="Rhea" id="RHEA:22096"/>
        <dbReference type="Rhea" id="RHEA-COMP:14527"/>
        <dbReference type="Rhea" id="RHEA-COMP:17342"/>
        <dbReference type="ChEBI" id="CHEBI:43474"/>
        <dbReference type="ChEBI" id="CHEBI:57930"/>
        <dbReference type="ChEBI" id="CHEBI:140395"/>
        <dbReference type="EC" id="2.7.7.8"/>
    </reaction>
</comment>
<comment type="cofactor">
    <cofactor evidence="1">
        <name>Mg(2+)</name>
        <dbReference type="ChEBI" id="CHEBI:18420"/>
    </cofactor>
</comment>
<comment type="subcellular location">
    <subcellularLocation>
        <location evidence="1">Cytoplasm</location>
    </subcellularLocation>
</comment>
<comment type="miscellaneous">
    <text>Present in outer membrane vesicle formulations which are used as vaccines in human.</text>
</comment>
<comment type="similarity">
    <text evidence="1">Belongs to the polyribonucleotide nucleotidyltransferase family.</text>
</comment>